<organism>
    <name type="scientific">Muraenesox cinereus</name>
    <name type="common">Daggertooth pike conger</name>
    <name type="synonym">Muraena cinerea</name>
    <dbReference type="NCBI Taxonomy" id="7946"/>
    <lineage>
        <taxon>Eukaryota</taxon>
        <taxon>Metazoa</taxon>
        <taxon>Chordata</taxon>
        <taxon>Craniata</taxon>
        <taxon>Vertebrata</taxon>
        <taxon>Euteleostomi</taxon>
        <taxon>Actinopterygii</taxon>
        <taxon>Neopterygii</taxon>
        <taxon>Teleostei</taxon>
        <taxon>Anguilliformes</taxon>
        <taxon>Muraenesocidae</taxon>
        <taxon>Muraenesox</taxon>
    </lineage>
</organism>
<comment type="function">
    <text>Involved in gametogenesis and steroidogenesis.</text>
</comment>
<comment type="subunit">
    <text>Heterodimer of an alpha and a beta chain.</text>
</comment>
<comment type="subcellular location">
    <subcellularLocation>
        <location>Secreted</location>
    </subcellularLocation>
</comment>
<comment type="similarity">
    <text evidence="2">Belongs to the glycoprotein hormones subunit beta family.</text>
</comment>
<keyword id="KW-0903">Direct protein sequencing</keyword>
<keyword id="KW-1015">Disulfide bond</keyword>
<keyword id="KW-0325">Glycoprotein</keyword>
<keyword id="KW-0372">Hormone</keyword>
<keyword id="KW-0964">Secreted</keyword>
<dbReference type="PIR" id="S07092">
    <property type="entry name" value="S07092"/>
</dbReference>
<dbReference type="SMR" id="P12837"/>
<dbReference type="GlyCosmos" id="P12837">
    <property type="glycosylation" value="1 site, No reported glycans"/>
</dbReference>
<dbReference type="GO" id="GO:0005737">
    <property type="term" value="C:cytoplasm"/>
    <property type="evidence" value="ECO:0007669"/>
    <property type="project" value="TreeGrafter"/>
</dbReference>
<dbReference type="GO" id="GO:0005615">
    <property type="term" value="C:extracellular space"/>
    <property type="evidence" value="ECO:0007669"/>
    <property type="project" value="TreeGrafter"/>
</dbReference>
<dbReference type="GO" id="GO:0005179">
    <property type="term" value="F:hormone activity"/>
    <property type="evidence" value="ECO:0007669"/>
    <property type="project" value="UniProtKB-KW"/>
</dbReference>
<dbReference type="GO" id="GO:0007186">
    <property type="term" value="P:G protein-coupled receptor signaling pathway"/>
    <property type="evidence" value="ECO:0007669"/>
    <property type="project" value="TreeGrafter"/>
</dbReference>
<dbReference type="CDD" id="cd00069">
    <property type="entry name" value="GHB_like"/>
    <property type="match status" value="1"/>
</dbReference>
<dbReference type="FunFam" id="2.10.90.10:FF:000007">
    <property type="entry name" value="Luteinizing hormone beta subunit"/>
    <property type="match status" value="1"/>
</dbReference>
<dbReference type="Gene3D" id="2.10.90.10">
    <property type="entry name" value="Cystine-knot cytokines"/>
    <property type="match status" value="1"/>
</dbReference>
<dbReference type="InterPro" id="IPR029034">
    <property type="entry name" value="Cystine-knot_cytokine"/>
</dbReference>
<dbReference type="InterPro" id="IPR006208">
    <property type="entry name" value="Glyco_hormone_CN"/>
</dbReference>
<dbReference type="InterPro" id="IPR001545">
    <property type="entry name" value="Gonadotropin_bsu"/>
</dbReference>
<dbReference type="InterPro" id="IPR018245">
    <property type="entry name" value="Gonadotropin_bsu_CS"/>
</dbReference>
<dbReference type="PANTHER" id="PTHR11515">
    <property type="entry name" value="GLYCOPROTEIN HORMONE BETA CHAIN"/>
    <property type="match status" value="1"/>
</dbReference>
<dbReference type="PANTHER" id="PTHR11515:SF11">
    <property type="entry name" value="LUTROPIN SUBUNIT BETA"/>
    <property type="match status" value="1"/>
</dbReference>
<dbReference type="Pfam" id="PF00007">
    <property type="entry name" value="Cys_knot"/>
    <property type="match status" value="1"/>
</dbReference>
<dbReference type="SMART" id="SM00068">
    <property type="entry name" value="GHB"/>
    <property type="match status" value="1"/>
</dbReference>
<dbReference type="SUPFAM" id="SSF57501">
    <property type="entry name" value="Cystine-knot cytokines"/>
    <property type="match status" value="1"/>
</dbReference>
<dbReference type="PROSITE" id="PS00261">
    <property type="entry name" value="GLYCO_HORMONE_BETA_1"/>
    <property type="match status" value="1"/>
</dbReference>
<dbReference type="PROSITE" id="PS00689">
    <property type="entry name" value="GLYCO_HORMONE_BETA_2"/>
    <property type="match status" value="1"/>
</dbReference>
<proteinExistence type="evidence at protein level"/>
<evidence type="ECO:0000250" key="1"/>
<evidence type="ECO:0000305" key="2"/>
<name>GTHB_MURCI</name>
<gene>
    <name type="primary">cgb</name>
</gene>
<protein>
    <recommendedName>
        <fullName>Gonadotropin subunit beta</fullName>
    </recommendedName>
    <alternativeName>
        <fullName>Gonadotropin beta chain</fullName>
    </alternativeName>
</protein>
<reference key="1">
    <citation type="journal article" date="1989" name="Eur. J. Biochem.">
        <title>Pike eel (Muraenesox cinereus) gonadotropin. Amino acid sequences of both alpha and beta subunits.</title>
        <authorList>
            <person name="Liu C.-S."/>
            <person name="Huang F.-L."/>
            <person name="Chang Y.-S."/>
            <person name="Lo T.-B."/>
        </authorList>
    </citation>
    <scope>PROTEIN SEQUENCE</scope>
    <source>
        <tissue>Pituitary</tissue>
    </source>
</reference>
<feature type="chain" id="PRO_0000149035" description="Gonadotropin subunit beta">
    <location>
        <begin position="1"/>
        <end position="113"/>
    </location>
</feature>
<feature type="glycosylation site" description="N-linked (GlcNAc...) asparagine">
    <location>
        <position position="10"/>
    </location>
</feature>
<feature type="disulfide bond" evidence="1">
    <location>
        <begin position="6"/>
        <end position="54"/>
    </location>
</feature>
<feature type="disulfide bond" evidence="1">
    <location>
        <begin position="20"/>
        <end position="69"/>
    </location>
</feature>
<feature type="disulfide bond" evidence="1">
    <location>
        <begin position="23"/>
        <end position="107"/>
    </location>
</feature>
<feature type="disulfide bond" evidence="1">
    <location>
        <begin position="31"/>
        <end position="85"/>
    </location>
</feature>
<feature type="disulfide bond" evidence="1">
    <location>
        <begin position="35"/>
        <end position="87"/>
    </location>
</feature>
<feature type="disulfide bond" evidence="1">
    <location>
        <begin position="90"/>
        <end position="97"/>
    </location>
</feature>
<accession>P12837</accession>
<sequence>SVLQPCQPINETISVEKDGCPKCLVFQTSICSGHCITKDPSYKSPLSTVYQRVCTYRDVRYETVRLPDCRPGVDPHVTFPVALSCDCNLCTMDTSDCAIQSLRPDFCMSQRAP</sequence>